<keyword id="KW-0903">Direct protein sequencing</keyword>
<keyword id="KW-1015">Disulfide bond</keyword>
<keyword id="KW-0872">Ion channel impairing toxin</keyword>
<keyword id="KW-0166">Nematocyst</keyword>
<keyword id="KW-0528">Neurotoxin</keyword>
<keyword id="KW-0646">Protease inhibitor</keyword>
<keyword id="KW-0964">Secreted</keyword>
<keyword id="KW-0722">Serine protease inhibitor</keyword>
<keyword id="KW-0800">Toxin</keyword>
<sequence length="56" mass="6117">GSICLEPKVVGPCTAYFPRFYFNSETGKCTPFIYGGCEGNGNNFETLRACRGICRA</sequence>
<dbReference type="SMR" id="C0HJF3"/>
<dbReference type="GO" id="GO:0005615">
    <property type="term" value="C:extracellular space"/>
    <property type="evidence" value="ECO:0007669"/>
    <property type="project" value="TreeGrafter"/>
</dbReference>
<dbReference type="GO" id="GO:0042151">
    <property type="term" value="C:nematocyst"/>
    <property type="evidence" value="ECO:0007669"/>
    <property type="project" value="UniProtKB-SubCell"/>
</dbReference>
<dbReference type="GO" id="GO:0099106">
    <property type="term" value="F:ion channel regulator activity"/>
    <property type="evidence" value="ECO:0007669"/>
    <property type="project" value="UniProtKB-KW"/>
</dbReference>
<dbReference type="GO" id="GO:0004867">
    <property type="term" value="F:serine-type endopeptidase inhibitor activity"/>
    <property type="evidence" value="ECO:0007669"/>
    <property type="project" value="UniProtKB-KW"/>
</dbReference>
<dbReference type="GO" id="GO:0090729">
    <property type="term" value="F:toxin activity"/>
    <property type="evidence" value="ECO:0007669"/>
    <property type="project" value="UniProtKB-KW"/>
</dbReference>
<dbReference type="CDD" id="cd22618">
    <property type="entry name" value="Kunitz_SHPI"/>
    <property type="match status" value="1"/>
</dbReference>
<dbReference type="FunFam" id="4.10.410.10:FF:000021">
    <property type="entry name" value="Serine protease inhibitor, putative"/>
    <property type="match status" value="1"/>
</dbReference>
<dbReference type="Gene3D" id="4.10.410.10">
    <property type="entry name" value="Pancreatic trypsin inhibitor Kunitz domain"/>
    <property type="match status" value="1"/>
</dbReference>
<dbReference type="InterPro" id="IPR002223">
    <property type="entry name" value="Kunitz_BPTI"/>
</dbReference>
<dbReference type="InterPro" id="IPR036880">
    <property type="entry name" value="Kunitz_BPTI_sf"/>
</dbReference>
<dbReference type="InterPro" id="IPR020901">
    <property type="entry name" value="Prtase_inh_Kunz-CS"/>
</dbReference>
<dbReference type="InterPro" id="IPR050098">
    <property type="entry name" value="TFPI/VKTCI-like"/>
</dbReference>
<dbReference type="PANTHER" id="PTHR10083:SF374">
    <property type="entry name" value="BPTI_KUNITZ INHIBITOR DOMAIN-CONTAINING PROTEIN"/>
    <property type="match status" value="1"/>
</dbReference>
<dbReference type="PANTHER" id="PTHR10083">
    <property type="entry name" value="KUNITZ-TYPE PROTEASE INHIBITOR-RELATED"/>
    <property type="match status" value="1"/>
</dbReference>
<dbReference type="Pfam" id="PF00014">
    <property type="entry name" value="Kunitz_BPTI"/>
    <property type="match status" value="1"/>
</dbReference>
<dbReference type="PRINTS" id="PR00759">
    <property type="entry name" value="BASICPTASE"/>
</dbReference>
<dbReference type="SMART" id="SM00131">
    <property type="entry name" value="KU"/>
    <property type="match status" value="1"/>
</dbReference>
<dbReference type="SUPFAM" id="SSF57362">
    <property type="entry name" value="BPTI-like"/>
    <property type="match status" value="1"/>
</dbReference>
<dbReference type="PROSITE" id="PS00280">
    <property type="entry name" value="BPTI_KUNITZ_1"/>
    <property type="match status" value="1"/>
</dbReference>
<dbReference type="PROSITE" id="PS50279">
    <property type="entry name" value="BPTI_KUNITZ_2"/>
    <property type="match status" value="1"/>
</dbReference>
<feature type="chain" id="PRO_0000424700" description="TauPI-stichotoxin-Hcr2d" evidence="3">
    <location>
        <begin position="1"/>
        <end position="56"/>
    </location>
</feature>
<feature type="domain" description="BPTI/Kunitz inhibitor" evidence="2">
    <location>
        <begin position="4"/>
        <end position="54"/>
    </location>
</feature>
<feature type="site" description="Reactive bond for trypsin" evidence="1">
    <location>
        <begin position="14"/>
        <end position="15"/>
    </location>
</feature>
<feature type="disulfide bond" evidence="1">
    <location>
        <begin position="4"/>
        <end position="54"/>
    </location>
</feature>
<feature type="disulfide bond" evidence="1">
    <location>
        <begin position="13"/>
        <end position="37"/>
    </location>
</feature>
<feature type="disulfide bond" evidence="1">
    <location>
        <begin position="29"/>
        <end position="50"/>
    </location>
</feature>
<proteinExistence type="evidence at protein level"/>
<evidence type="ECO:0000250" key="1">
    <source>
        <dbReference type="UniProtKB" id="P31713"/>
    </source>
</evidence>
<evidence type="ECO:0000255" key="2">
    <source>
        <dbReference type="PROSITE-ProRule" id="PRU00031"/>
    </source>
</evidence>
<evidence type="ECO:0000269" key="3">
    <source>
    </source>
</evidence>
<evidence type="ECO:0000269" key="4">
    <source>
    </source>
</evidence>
<evidence type="ECO:0000269" key="5">
    <source>
    </source>
</evidence>
<evidence type="ECO:0000269" key="6">
    <source>
    </source>
</evidence>
<evidence type="ECO:0000303" key="7">
    <source>
    </source>
</evidence>
<evidence type="ECO:0000305" key="8"/>
<organism>
    <name type="scientific">Radianthus crispa</name>
    <name type="common">Leathery sea anemone</name>
    <name type="synonym">Heteractis crispa</name>
    <dbReference type="NCBI Taxonomy" id="3122430"/>
    <lineage>
        <taxon>Eukaryota</taxon>
        <taxon>Metazoa</taxon>
        <taxon>Cnidaria</taxon>
        <taxon>Anthozoa</taxon>
        <taxon>Hexacorallia</taxon>
        <taxon>Actiniaria</taxon>
        <taxon>Stichodactylidae</taxon>
        <taxon>Radianthus</taxon>
    </lineage>
</organism>
<reference key="1">
    <citation type="journal article" date="2009" name="Bioorg. Khim.">
        <title>New polypeptide components from the Heteractis crispa sea anemone with analgesic activity.</title>
        <authorList>
            <person name="Kozlov S.A."/>
            <person name="Andreev Y.A."/>
            <person name="Murashev A.N."/>
            <person name="Skobtsov D.I."/>
            <person name="D'iachenko I.A."/>
            <person name="Grishin E.V."/>
        </authorList>
    </citation>
    <scope>PROTEIN SEQUENCE</scope>
    <scope>FUNCTION</scope>
    <scope>SUBCELLULAR LOCATION</scope>
    <scope>MASS SPECTROMETRY</scope>
    <source>
        <tissue>Nematoblast</tissue>
    </source>
</reference>
<reference key="2">
    <citation type="journal article" date="2012" name="Life Sci.">
        <title>Modulation of TRPV1-dependent contractility of normal and diabetic bladder smooth muscle by analgesic toxins from sea anemone Heteractis crispa.</title>
        <authorList>
            <person name="Philyppov I.B."/>
            <person name="Paduraru O.N."/>
            <person name="Andreev Y.A."/>
            <person name="Grishin E.V."/>
            <person name="Shuba Y.M."/>
        </authorList>
    </citation>
    <scope>FUNCTION</scope>
</reference>
<reference key="3">
    <citation type="journal article" date="2013" name="Mar. Drugs">
        <title>Polypeptide modulators of TRPV1 produce analgesia without hyperthermia.</title>
        <authorList>
            <person name="Andreev Y.A."/>
            <person name="Kozlov S.A."/>
            <person name="Korolkova Y.V."/>
            <person name="Dyachenko I.A."/>
            <person name="Bondarenko D.A."/>
            <person name="Skobtsov D.I."/>
            <person name="Murashev A.N."/>
            <person name="Kotova P.D."/>
            <person name="Rogachevskaja O.A."/>
            <person name="Kabanova N.V."/>
            <person name="Kolesnikov S.S."/>
            <person name="Grishin E.V."/>
        </authorList>
    </citation>
    <scope>FUNCTION</scope>
</reference>
<reference key="4">
    <citation type="journal article" date="2021" name="Mar. Drugs">
        <title>Anti-inflammatory and analgesic effects of TRPV1 polypeptide modulator APHC3 in models of osteo- and rheumatoid arthritis.</title>
        <authorList>
            <person name="Logashina Y.A."/>
            <person name="Palikova Y.A."/>
            <person name="Palikov V.A."/>
            <person name="Kazakov V.A."/>
            <person name="Smolskaya S.V."/>
            <person name="Dyachenko I.A."/>
            <person name="Tarasova N.V."/>
            <person name="Andreev Y.A."/>
        </authorList>
    </citation>
    <scope>FUNCTION</scope>
</reference>
<comment type="function">
    <text evidence="3 4 5 6">This protease inhibitor shows two different activities, it inhibits both the capsaicin receptor TRPV1 and serine proteases. It partially blocks the capsaicin- and acid-induced response of TRPV1, a receptor of the pain pathway (PubMed:20208578, PubMed:24351908). It also weakly inhibits trypsin and chymotrypsin activity (Ki=0.5 uM and Ki=7 uM, respectively) (PubMed:20208578). In addition, it may also alter tachykinin levels by suppressing endogenous proteases (PubMed:22982418). In vivo, it shows antinociceptive and analgesic activities (PubMed:24351908). It significantly prolongs paw withdrawal latency and blocks heat-induced and chemical-induced acute pain (PubMed:20208578). In addition, it also shows anti-inflammatory and analgesic effects in models of osteoarthritis and rheumatoid arthritis (PubMed:33477357). In vivo, unlike other TRPV1 antagonists whose activity is associated with hyperthermia, this protein has the remarkable feature of dropping core body temperature (PubMed:24351908).</text>
</comment>
<comment type="subcellular location">
    <subcellularLocation>
        <location evidence="3">Secreted</location>
    </subcellularLocation>
    <subcellularLocation>
        <location evidence="3">Nematocyst</location>
    </subcellularLocation>
</comment>
<comment type="mass spectrometry" mass="6111.0" method="MALDI" evidence="3"/>
<comment type="miscellaneous">
    <text evidence="3">Negative results: intravenous dose (up to 1mg/kg) has no toxic effect and generates no behavioral disorders in mice.</text>
</comment>
<comment type="miscellaneous">
    <text evidence="8">A synonymy between H.magnifica and R.crispa is controversial.</text>
</comment>
<comment type="similarity">
    <text evidence="8">Belongs to the venom Kunitz-type family. Sea anemone type 2 potassium channel toxin subfamily.</text>
</comment>
<name>VKT2D_RADCR</name>
<protein>
    <recommendedName>
        <fullName evidence="8">TauPI-stichotoxin-Hcr2d</fullName>
        <shortName evidence="8">TauPI-SHTX-Hcr2d</shortName>
    </recommendedName>
    <alternativeName>
        <fullName evidence="7">Analgesic polypeptide HC3</fullName>
        <shortName evidence="7">APHC3</shortName>
    </alternativeName>
</protein>
<accession>C0HJF3</accession>